<proteinExistence type="inferred from homology"/>
<reference key="1">
    <citation type="submission" date="2008-01" db="EMBL/GenBank/DDBJ databases">
        <title>Complete sequence of Thermoanaerobacter pseudethanolicus 39E.</title>
        <authorList>
            <person name="Copeland A."/>
            <person name="Lucas S."/>
            <person name="Lapidus A."/>
            <person name="Barry K."/>
            <person name="Glavina del Rio T."/>
            <person name="Dalin E."/>
            <person name="Tice H."/>
            <person name="Pitluck S."/>
            <person name="Bruce D."/>
            <person name="Goodwin L."/>
            <person name="Saunders E."/>
            <person name="Brettin T."/>
            <person name="Detter J.C."/>
            <person name="Han C."/>
            <person name="Schmutz J."/>
            <person name="Larimer F."/>
            <person name="Land M."/>
            <person name="Hauser L."/>
            <person name="Kyrpides N."/>
            <person name="Lykidis A."/>
            <person name="Hemme C."/>
            <person name="Fields M.W."/>
            <person name="He Z."/>
            <person name="Zhou J."/>
            <person name="Richardson P."/>
        </authorList>
    </citation>
    <scope>NUCLEOTIDE SEQUENCE [LARGE SCALE GENOMIC DNA]</scope>
    <source>
        <strain>ATCC 33223 / DSM 2355 / 39E</strain>
    </source>
</reference>
<name>RISB_THEP3</name>
<protein>
    <recommendedName>
        <fullName evidence="1">6,7-dimethyl-8-ribityllumazine synthase</fullName>
        <shortName evidence="1">DMRL synthase</shortName>
        <shortName evidence="1">LS</shortName>
        <shortName evidence="1">Lumazine synthase</shortName>
        <ecNumber evidence="1">2.5.1.78</ecNumber>
    </recommendedName>
</protein>
<sequence>MKIYEGKLIAEGKKFGIVVSRFNEFITNKLLEGALDALKRHGALNEDIEIAWVPGAFEIPLIAKKMAESKRYDAVIALGAVIRGETPHFDYVANEVSKGIAKISLDTEVPVIFGVLTTDTIEQAIVRAGTKGGNKGFEAAVTAIEMANLMEEIK</sequence>
<organism>
    <name type="scientific">Thermoanaerobacter pseudethanolicus (strain ATCC 33223 / 39E)</name>
    <name type="common">Clostridium thermohydrosulfuricum</name>
    <dbReference type="NCBI Taxonomy" id="340099"/>
    <lineage>
        <taxon>Bacteria</taxon>
        <taxon>Bacillati</taxon>
        <taxon>Bacillota</taxon>
        <taxon>Clostridia</taxon>
        <taxon>Thermoanaerobacterales</taxon>
        <taxon>Thermoanaerobacteraceae</taxon>
        <taxon>Thermoanaerobacter</taxon>
    </lineage>
</organism>
<dbReference type="EC" id="2.5.1.78" evidence="1"/>
<dbReference type="EMBL" id="CP000924">
    <property type="protein sequence ID" value="ABY93697.1"/>
    <property type="molecule type" value="Genomic_DNA"/>
</dbReference>
<dbReference type="SMR" id="B0KAI3"/>
<dbReference type="STRING" id="340099.Teth39_0024"/>
<dbReference type="KEGG" id="tpd:Teth39_0024"/>
<dbReference type="eggNOG" id="COG0054">
    <property type="taxonomic scope" value="Bacteria"/>
</dbReference>
<dbReference type="HOGENOM" id="CLU_089358_1_1_9"/>
<dbReference type="UniPathway" id="UPA00275">
    <property type="reaction ID" value="UER00404"/>
</dbReference>
<dbReference type="Proteomes" id="UP000002156">
    <property type="component" value="Chromosome"/>
</dbReference>
<dbReference type="GO" id="GO:0005829">
    <property type="term" value="C:cytosol"/>
    <property type="evidence" value="ECO:0007669"/>
    <property type="project" value="TreeGrafter"/>
</dbReference>
<dbReference type="GO" id="GO:0009349">
    <property type="term" value="C:riboflavin synthase complex"/>
    <property type="evidence" value="ECO:0007669"/>
    <property type="project" value="InterPro"/>
</dbReference>
<dbReference type="GO" id="GO:0000906">
    <property type="term" value="F:6,7-dimethyl-8-ribityllumazine synthase activity"/>
    <property type="evidence" value="ECO:0007669"/>
    <property type="project" value="UniProtKB-UniRule"/>
</dbReference>
<dbReference type="GO" id="GO:0009231">
    <property type="term" value="P:riboflavin biosynthetic process"/>
    <property type="evidence" value="ECO:0007669"/>
    <property type="project" value="UniProtKB-UniRule"/>
</dbReference>
<dbReference type="CDD" id="cd09209">
    <property type="entry name" value="Lumazine_synthase-I"/>
    <property type="match status" value="1"/>
</dbReference>
<dbReference type="FunFam" id="3.40.50.960:FF:000001">
    <property type="entry name" value="6,7-dimethyl-8-ribityllumazine synthase"/>
    <property type="match status" value="1"/>
</dbReference>
<dbReference type="Gene3D" id="3.40.50.960">
    <property type="entry name" value="Lumazine/riboflavin synthase"/>
    <property type="match status" value="1"/>
</dbReference>
<dbReference type="HAMAP" id="MF_00178">
    <property type="entry name" value="Lumazine_synth"/>
    <property type="match status" value="1"/>
</dbReference>
<dbReference type="InterPro" id="IPR034964">
    <property type="entry name" value="LS"/>
</dbReference>
<dbReference type="InterPro" id="IPR002180">
    <property type="entry name" value="LS/RS"/>
</dbReference>
<dbReference type="InterPro" id="IPR036467">
    <property type="entry name" value="LS/RS_sf"/>
</dbReference>
<dbReference type="NCBIfam" id="TIGR00114">
    <property type="entry name" value="lumazine-synth"/>
    <property type="match status" value="1"/>
</dbReference>
<dbReference type="NCBIfam" id="NF000812">
    <property type="entry name" value="PRK00061.1-4"/>
    <property type="match status" value="1"/>
</dbReference>
<dbReference type="PANTHER" id="PTHR21058:SF0">
    <property type="entry name" value="6,7-DIMETHYL-8-RIBITYLLUMAZINE SYNTHASE"/>
    <property type="match status" value="1"/>
</dbReference>
<dbReference type="PANTHER" id="PTHR21058">
    <property type="entry name" value="6,7-DIMETHYL-8-RIBITYLLUMAZINE SYNTHASE DMRL SYNTHASE LUMAZINE SYNTHASE"/>
    <property type="match status" value="1"/>
</dbReference>
<dbReference type="Pfam" id="PF00885">
    <property type="entry name" value="DMRL_synthase"/>
    <property type="match status" value="1"/>
</dbReference>
<dbReference type="SUPFAM" id="SSF52121">
    <property type="entry name" value="Lumazine synthase"/>
    <property type="match status" value="1"/>
</dbReference>
<accession>B0KAI3</accession>
<keyword id="KW-1185">Reference proteome</keyword>
<keyword id="KW-0686">Riboflavin biosynthesis</keyword>
<keyword id="KW-0808">Transferase</keyword>
<evidence type="ECO:0000255" key="1">
    <source>
        <dbReference type="HAMAP-Rule" id="MF_00178"/>
    </source>
</evidence>
<gene>
    <name evidence="1" type="primary">ribH</name>
    <name type="ordered locus">Teth39_0024</name>
</gene>
<feature type="chain" id="PRO_1000098243" description="6,7-dimethyl-8-ribityllumazine synthase">
    <location>
        <begin position="1"/>
        <end position="154"/>
    </location>
</feature>
<feature type="active site" description="Proton donor" evidence="1">
    <location>
        <position position="88"/>
    </location>
</feature>
<feature type="binding site" evidence="1">
    <location>
        <position position="22"/>
    </location>
    <ligand>
        <name>5-amino-6-(D-ribitylamino)uracil</name>
        <dbReference type="ChEBI" id="CHEBI:15934"/>
    </ligand>
</feature>
<feature type="binding site" evidence="1">
    <location>
        <begin position="56"/>
        <end position="58"/>
    </location>
    <ligand>
        <name>5-amino-6-(D-ribitylamino)uracil</name>
        <dbReference type="ChEBI" id="CHEBI:15934"/>
    </ligand>
</feature>
<feature type="binding site" evidence="1">
    <location>
        <begin position="80"/>
        <end position="82"/>
    </location>
    <ligand>
        <name>5-amino-6-(D-ribitylamino)uracil</name>
        <dbReference type="ChEBI" id="CHEBI:15934"/>
    </ligand>
</feature>
<feature type="binding site" evidence="1">
    <location>
        <begin position="85"/>
        <end position="86"/>
    </location>
    <ligand>
        <name>(2S)-2-hydroxy-3-oxobutyl phosphate</name>
        <dbReference type="ChEBI" id="CHEBI:58830"/>
    </ligand>
</feature>
<feature type="binding site" evidence="1">
    <location>
        <position position="113"/>
    </location>
    <ligand>
        <name>5-amino-6-(D-ribitylamino)uracil</name>
        <dbReference type="ChEBI" id="CHEBI:15934"/>
    </ligand>
</feature>
<feature type="binding site" evidence="1">
    <location>
        <position position="127"/>
    </location>
    <ligand>
        <name>(2S)-2-hydroxy-3-oxobutyl phosphate</name>
        <dbReference type="ChEBI" id="CHEBI:58830"/>
    </ligand>
</feature>
<comment type="function">
    <text evidence="1">Catalyzes the formation of 6,7-dimethyl-8-ribityllumazine by condensation of 5-amino-6-(D-ribitylamino)uracil with 3,4-dihydroxy-2-butanone 4-phosphate. This is the penultimate step in the biosynthesis of riboflavin.</text>
</comment>
<comment type="catalytic activity">
    <reaction evidence="1">
        <text>(2S)-2-hydroxy-3-oxobutyl phosphate + 5-amino-6-(D-ribitylamino)uracil = 6,7-dimethyl-8-(1-D-ribityl)lumazine + phosphate + 2 H2O + H(+)</text>
        <dbReference type="Rhea" id="RHEA:26152"/>
        <dbReference type="ChEBI" id="CHEBI:15377"/>
        <dbReference type="ChEBI" id="CHEBI:15378"/>
        <dbReference type="ChEBI" id="CHEBI:15934"/>
        <dbReference type="ChEBI" id="CHEBI:43474"/>
        <dbReference type="ChEBI" id="CHEBI:58201"/>
        <dbReference type="ChEBI" id="CHEBI:58830"/>
        <dbReference type="EC" id="2.5.1.78"/>
    </reaction>
</comment>
<comment type="pathway">
    <text evidence="1">Cofactor biosynthesis; riboflavin biosynthesis; riboflavin from 2-hydroxy-3-oxobutyl phosphate and 5-amino-6-(D-ribitylamino)uracil: step 1/2.</text>
</comment>
<comment type="similarity">
    <text evidence="1">Belongs to the DMRL synthase family.</text>
</comment>